<reference key="1">
    <citation type="journal article" date="2008" name="Genome Res.">
        <title>Chlamydia trachomatis: genome sequence analysis of lymphogranuloma venereum isolates.</title>
        <authorList>
            <person name="Thomson N.R."/>
            <person name="Holden M.T.G."/>
            <person name="Carder C."/>
            <person name="Lennard N."/>
            <person name="Lockey S.J."/>
            <person name="Marsh P."/>
            <person name="Skipp P."/>
            <person name="O'Connor C.D."/>
            <person name="Goodhead I."/>
            <person name="Norbertzcak H."/>
            <person name="Harris B."/>
            <person name="Ormond D."/>
            <person name="Rance R."/>
            <person name="Quail M.A."/>
            <person name="Parkhill J."/>
            <person name="Stephens R.S."/>
            <person name="Clarke I.N."/>
        </authorList>
    </citation>
    <scope>NUCLEOTIDE SEQUENCE [LARGE SCALE GENOMIC DNA]</scope>
    <source>
        <strain>UCH-1/proctitis</strain>
    </source>
</reference>
<feature type="chain" id="PRO_1000095918" description="N-(5'-phosphoribosyl)anthranilate isomerase">
    <location>
        <begin position="1"/>
        <end position="208"/>
    </location>
</feature>
<keyword id="KW-0028">Amino-acid biosynthesis</keyword>
<keyword id="KW-0057">Aromatic amino acid biosynthesis</keyword>
<keyword id="KW-0413">Isomerase</keyword>
<keyword id="KW-0822">Tryptophan biosynthesis</keyword>
<gene>
    <name evidence="1" type="primary">trpF</name>
    <name type="ordered locus">CTLon_0577</name>
</gene>
<name>TRPF_CHLTB</name>
<dbReference type="EC" id="5.3.1.24" evidence="1"/>
<dbReference type="EMBL" id="AM884177">
    <property type="protein sequence ID" value="CAP06974.1"/>
    <property type="molecule type" value="Genomic_DNA"/>
</dbReference>
<dbReference type="RefSeq" id="WP_009873729.1">
    <property type="nucleotide sequence ID" value="NC_010280.2"/>
</dbReference>
<dbReference type="SMR" id="B0BBV9"/>
<dbReference type="KEGG" id="ctl:CTLon_0577"/>
<dbReference type="HOGENOM" id="CLU_076364_1_0_0"/>
<dbReference type="UniPathway" id="UPA00035">
    <property type="reaction ID" value="UER00042"/>
</dbReference>
<dbReference type="Proteomes" id="UP001154401">
    <property type="component" value="Chromosome"/>
</dbReference>
<dbReference type="GO" id="GO:0004640">
    <property type="term" value="F:phosphoribosylanthranilate isomerase activity"/>
    <property type="evidence" value="ECO:0007669"/>
    <property type="project" value="UniProtKB-UniRule"/>
</dbReference>
<dbReference type="GO" id="GO:0000162">
    <property type="term" value="P:L-tryptophan biosynthetic process"/>
    <property type="evidence" value="ECO:0007669"/>
    <property type="project" value="UniProtKB-UniRule"/>
</dbReference>
<dbReference type="CDD" id="cd00405">
    <property type="entry name" value="PRAI"/>
    <property type="match status" value="1"/>
</dbReference>
<dbReference type="Gene3D" id="3.20.20.70">
    <property type="entry name" value="Aldolase class I"/>
    <property type="match status" value="1"/>
</dbReference>
<dbReference type="HAMAP" id="MF_00135">
    <property type="entry name" value="PRAI"/>
    <property type="match status" value="1"/>
</dbReference>
<dbReference type="InterPro" id="IPR013785">
    <property type="entry name" value="Aldolase_TIM"/>
</dbReference>
<dbReference type="InterPro" id="IPR001240">
    <property type="entry name" value="PRAI_dom"/>
</dbReference>
<dbReference type="InterPro" id="IPR011060">
    <property type="entry name" value="RibuloseP-bd_barrel"/>
</dbReference>
<dbReference type="InterPro" id="IPR044643">
    <property type="entry name" value="TrpF_fam"/>
</dbReference>
<dbReference type="NCBIfam" id="NF002303">
    <property type="entry name" value="PRK01222.2-3"/>
    <property type="match status" value="1"/>
</dbReference>
<dbReference type="PANTHER" id="PTHR42894">
    <property type="entry name" value="N-(5'-PHOSPHORIBOSYL)ANTHRANILATE ISOMERASE"/>
    <property type="match status" value="1"/>
</dbReference>
<dbReference type="PANTHER" id="PTHR42894:SF1">
    <property type="entry name" value="N-(5'-PHOSPHORIBOSYL)ANTHRANILATE ISOMERASE"/>
    <property type="match status" value="1"/>
</dbReference>
<dbReference type="Pfam" id="PF00697">
    <property type="entry name" value="PRAI"/>
    <property type="match status" value="1"/>
</dbReference>
<dbReference type="SUPFAM" id="SSF51366">
    <property type="entry name" value="Ribulose-phoshate binding barrel"/>
    <property type="match status" value="1"/>
</dbReference>
<sequence>MKVKICGITHPDDAREAAKAGADYIGMIFAKDSRRCVSEEKAKYIVEAIQEGNSEPVGVFPEHSVEEILAITEATGITSIQLSGEDILFKFSQLREHFSIFYVVSVYSNGQPSAALPPMNDAVTVVYDHIGGERGSPFDWKAFSPFQHNNWMLGGGVNLWNIKEGISLLNPRGIDVSSGVERPGILRKDIFLMQALINSAKELSSSTL</sequence>
<comment type="catalytic activity">
    <reaction evidence="1">
        <text>N-(5-phospho-beta-D-ribosyl)anthranilate = 1-(2-carboxyphenylamino)-1-deoxy-D-ribulose 5-phosphate</text>
        <dbReference type="Rhea" id="RHEA:21540"/>
        <dbReference type="ChEBI" id="CHEBI:18277"/>
        <dbReference type="ChEBI" id="CHEBI:58613"/>
        <dbReference type="EC" id="5.3.1.24"/>
    </reaction>
</comment>
<comment type="pathway">
    <text evidence="1">Amino-acid biosynthesis; L-tryptophan biosynthesis; L-tryptophan from chorismate: step 3/5.</text>
</comment>
<comment type="similarity">
    <text evidence="1">Belongs to the TrpF family.</text>
</comment>
<evidence type="ECO:0000255" key="1">
    <source>
        <dbReference type="HAMAP-Rule" id="MF_00135"/>
    </source>
</evidence>
<protein>
    <recommendedName>
        <fullName evidence="1">N-(5'-phosphoribosyl)anthranilate isomerase</fullName>
        <shortName evidence="1">PRAI</shortName>
        <ecNumber evidence="1">5.3.1.24</ecNumber>
    </recommendedName>
</protein>
<accession>B0BBV9</accession>
<proteinExistence type="inferred from homology"/>
<organism>
    <name type="scientific">Chlamydia trachomatis serovar L2b (strain UCH-1/proctitis)</name>
    <dbReference type="NCBI Taxonomy" id="471473"/>
    <lineage>
        <taxon>Bacteria</taxon>
        <taxon>Pseudomonadati</taxon>
        <taxon>Chlamydiota</taxon>
        <taxon>Chlamydiia</taxon>
        <taxon>Chlamydiales</taxon>
        <taxon>Chlamydiaceae</taxon>
        <taxon>Chlamydia/Chlamydophila group</taxon>
        <taxon>Chlamydia</taxon>
    </lineage>
</organism>